<feature type="signal peptide" evidence="1">
    <location>
        <begin position="1"/>
        <end position="15"/>
    </location>
</feature>
<feature type="chain" id="PRO_1000067495" description="UPF0194 membrane protein YbhG">
    <location>
        <begin position="16"/>
        <end position="331"/>
    </location>
</feature>
<feature type="coiled-coil region" evidence="1">
    <location>
        <begin position="107"/>
        <end position="208"/>
    </location>
</feature>
<gene>
    <name evidence="1" type="primary">ybhG</name>
    <name type="ordered locus">EcHS_A0849</name>
</gene>
<proteinExistence type="inferred from homology"/>
<dbReference type="EMBL" id="CP000802">
    <property type="protein sequence ID" value="ABV05205.1"/>
    <property type="molecule type" value="Genomic_DNA"/>
</dbReference>
<dbReference type="SMR" id="A7ZY51"/>
<dbReference type="KEGG" id="ecx:EcHS_A0849"/>
<dbReference type="HOGENOM" id="CLU_018816_6_3_6"/>
<dbReference type="GO" id="GO:0042597">
    <property type="term" value="C:periplasmic space"/>
    <property type="evidence" value="ECO:0007669"/>
    <property type="project" value="UniProtKB-SubCell"/>
</dbReference>
<dbReference type="FunFam" id="1.10.287.470:FF:000004">
    <property type="entry name" value="UPF0194 membrane protein YbhG"/>
    <property type="match status" value="1"/>
</dbReference>
<dbReference type="FunFam" id="2.40.30.170:FF:000005">
    <property type="entry name" value="UPF0194 membrane protein YbhG"/>
    <property type="match status" value="1"/>
</dbReference>
<dbReference type="FunFam" id="2.40.50.100:FF:000025">
    <property type="entry name" value="UPF0194 membrane protein YbhG"/>
    <property type="match status" value="1"/>
</dbReference>
<dbReference type="Gene3D" id="2.40.30.170">
    <property type="match status" value="1"/>
</dbReference>
<dbReference type="Gene3D" id="2.40.50.100">
    <property type="match status" value="2"/>
</dbReference>
<dbReference type="Gene3D" id="1.10.287.470">
    <property type="entry name" value="Helix hairpin bin"/>
    <property type="match status" value="2"/>
</dbReference>
<dbReference type="HAMAP" id="MF_01304">
    <property type="entry name" value="UPF0194"/>
    <property type="match status" value="1"/>
</dbReference>
<dbReference type="InterPro" id="IPR032317">
    <property type="entry name" value="CusB_D23"/>
</dbReference>
<dbReference type="InterPro" id="IPR022936">
    <property type="entry name" value="UPF0194_membrane_YbhG"/>
</dbReference>
<dbReference type="InterPro" id="IPR050465">
    <property type="entry name" value="UPF0194_transport"/>
</dbReference>
<dbReference type="NCBIfam" id="NF002939">
    <property type="entry name" value="PRK03598.1"/>
    <property type="match status" value="1"/>
</dbReference>
<dbReference type="PANTHER" id="PTHR32347">
    <property type="entry name" value="EFFLUX SYSTEM COMPONENT YKNX-RELATED"/>
    <property type="match status" value="1"/>
</dbReference>
<dbReference type="PANTHER" id="PTHR32347:SF29">
    <property type="entry name" value="UPF0194 MEMBRANE PROTEIN YBHG"/>
    <property type="match status" value="1"/>
</dbReference>
<dbReference type="Pfam" id="PF16576">
    <property type="entry name" value="HlyD_D23"/>
    <property type="match status" value="1"/>
</dbReference>
<dbReference type="SUPFAM" id="SSF111369">
    <property type="entry name" value="HlyD-like secretion proteins"/>
    <property type="match status" value="3"/>
</dbReference>
<accession>A7ZY51</accession>
<name>YBHG_ECOHS</name>
<keyword id="KW-0175">Coiled coil</keyword>
<keyword id="KW-0574">Periplasm</keyword>
<keyword id="KW-0732">Signal</keyword>
<organism>
    <name type="scientific">Escherichia coli O9:H4 (strain HS)</name>
    <dbReference type="NCBI Taxonomy" id="331112"/>
    <lineage>
        <taxon>Bacteria</taxon>
        <taxon>Pseudomonadati</taxon>
        <taxon>Pseudomonadota</taxon>
        <taxon>Gammaproteobacteria</taxon>
        <taxon>Enterobacterales</taxon>
        <taxon>Enterobacteriaceae</taxon>
        <taxon>Escherichia</taxon>
    </lineage>
</organism>
<protein>
    <recommendedName>
        <fullName evidence="1">UPF0194 membrane protein YbhG</fullName>
    </recommendedName>
</protein>
<sequence>MKKPVVIGLAVVVLAAVVAGGYWWYQSRQDNGLTLYGNVDIRTVNLSFRVGGRVESLAVDEGDAIKAGQVLGELDHKPYEIALMQAKAGVSVAQAQYDLMLAGYRDEEIAQAAAAVKQAQAAYDYAQNFYNRQQGLWKSRTISANDLENARSSRDQAQATLKSAQDKLRQYRSGNREQDIAQAKASLEQAQAQLAQAELNLQDSTLIAPSDGTLLTRAVEPGTVLNEGGTVFTVSLTRPVWVRAYVDERNLDQAQPGRKVLLYTDGRPDKPYHGQIGFVSPTAEFTPKTVETPDLRTDLVYRLRIVVTDADDALRQGMPVTVQFGDEAGHE</sequence>
<evidence type="ECO:0000255" key="1">
    <source>
        <dbReference type="HAMAP-Rule" id="MF_01304"/>
    </source>
</evidence>
<comment type="subcellular location">
    <subcellularLocation>
        <location evidence="1">Periplasm</location>
    </subcellularLocation>
</comment>
<comment type="similarity">
    <text evidence="1">Belongs to the UPF0194 family.</text>
</comment>
<reference key="1">
    <citation type="journal article" date="2008" name="J. Bacteriol.">
        <title>The pangenome structure of Escherichia coli: comparative genomic analysis of E. coli commensal and pathogenic isolates.</title>
        <authorList>
            <person name="Rasko D.A."/>
            <person name="Rosovitz M.J."/>
            <person name="Myers G.S.A."/>
            <person name="Mongodin E.F."/>
            <person name="Fricke W.F."/>
            <person name="Gajer P."/>
            <person name="Crabtree J."/>
            <person name="Sebaihia M."/>
            <person name="Thomson N.R."/>
            <person name="Chaudhuri R."/>
            <person name="Henderson I.R."/>
            <person name="Sperandio V."/>
            <person name="Ravel J."/>
        </authorList>
    </citation>
    <scope>NUCLEOTIDE SEQUENCE [LARGE SCALE GENOMIC DNA]</scope>
    <source>
        <strain>HS</strain>
    </source>
</reference>